<dbReference type="EC" id="2.1.1.45" evidence="1"/>
<dbReference type="EMBL" id="BX842655">
    <property type="protein sequence ID" value="CAE78047.1"/>
    <property type="molecule type" value="Genomic_DNA"/>
</dbReference>
<dbReference type="RefSeq" id="WP_011165585.1">
    <property type="nucleotide sequence ID" value="NC_005363.1"/>
</dbReference>
<dbReference type="SMR" id="Q6MID2"/>
<dbReference type="STRING" id="264462.Bd3230"/>
<dbReference type="GeneID" id="93014067"/>
<dbReference type="KEGG" id="bba:Bd3230"/>
<dbReference type="eggNOG" id="COG0207">
    <property type="taxonomic scope" value="Bacteria"/>
</dbReference>
<dbReference type="HOGENOM" id="CLU_021669_0_0_7"/>
<dbReference type="UniPathway" id="UPA00575"/>
<dbReference type="Proteomes" id="UP000008080">
    <property type="component" value="Chromosome"/>
</dbReference>
<dbReference type="GO" id="GO:0005829">
    <property type="term" value="C:cytosol"/>
    <property type="evidence" value="ECO:0007669"/>
    <property type="project" value="TreeGrafter"/>
</dbReference>
<dbReference type="GO" id="GO:0004799">
    <property type="term" value="F:thymidylate synthase activity"/>
    <property type="evidence" value="ECO:0007669"/>
    <property type="project" value="UniProtKB-UniRule"/>
</dbReference>
<dbReference type="GO" id="GO:0006231">
    <property type="term" value="P:dTMP biosynthetic process"/>
    <property type="evidence" value="ECO:0007669"/>
    <property type="project" value="UniProtKB-UniRule"/>
</dbReference>
<dbReference type="GO" id="GO:0006235">
    <property type="term" value="P:dTTP biosynthetic process"/>
    <property type="evidence" value="ECO:0007669"/>
    <property type="project" value="UniProtKB-UniRule"/>
</dbReference>
<dbReference type="GO" id="GO:0032259">
    <property type="term" value="P:methylation"/>
    <property type="evidence" value="ECO:0007669"/>
    <property type="project" value="UniProtKB-KW"/>
</dbReference>
<dbReference type="CDD" id="cd00351">
    <property type="entry name" value="TS_Pyrimidine_HMase"/>
    <property type="match status" value="1"/>
</dbReference>
<dbReference type="FunFam" id="3.30.572.10:FF:000001">
    <property type="entry name" value="Thymidylate synthase"/>
    <property type="match status" value="1"/>
</dbReference>
<dbReference type="Gene3D" id="3.30.572.10">
    <property type="entry name" value="Thymidylate synthase/dCMP hydroxymethylase domain"/>
    <property type="match status" value="1"/>
</dbReference>
<dbReference type="HAMAP" id="MF_00008">
    <property type="entry name" value="Thymidy_synth_bact"/>
    <property type="match status" value="1"/>
</dbReference>
<dbReference type="InterPro" id="IPR045097">
    <property type="entry name" value="Thymidate_synth/dCMP_Mease"/>
</dbReference>
<dbReference type="InterPro" id="IPR023451">
    <property type="entry name" value="Thymidate_synth/dCMP_Mease_dom"/>
</dbReference>
<dbReference type="InterPro" id="IPR036926">
    <property type="entry name" value="Thymidate_synth/dCMP_Mease_sf"/>
</dbReference>
<dbReference type="InterPro" id="IPR000398">
    <property type="entry name" value="Thymidylate_synthase"/>
</dbReference>
<dbReference type="InterPro" id="IPR020940">
    <property type="entry name" value="Thymidylate_synthase_AS"/>
</dbReference>
<dbReference type="NCBIfam" id="NF002497">
    <property type="entry name" value="PRK01827.1-3"/>
    <property type="match status" value="1"/>
</dbReference>
<dbReference type="NCBIfam" id="NF002499">
    <property type="entry name" value="PRK01827.1-5"/>
    <property type="match status" value="1"/>
</dbReference>
<dbReference type="NCBIfam" id="TIGR03284">
    <property type="entry name" value="thym_sym"/>
    <property type="match status" value="2"/>
</dbReference>
<dbReference type="PANTHER" id="PTHR11548:SF9">
    <property type="entry name" value="THYMIDYLATE SYNTHASE"/>
    <property type="match status" value="1"/>
</dbReference>
<dbReference type="PANTHER" id="PTHR11548">
    <property type="entry name" value="THYMIDYLATE SYNTHASE 1"/>
    <property type="match status" value="1"/>
</dbReference>
<dbReference type="Pfam" id="PF00303">
    <property type="entry name" value="Thymidylat_synt"/>
    <property type="match status" value="1"/>
</dbReference>
<dbReference type="PRINTS" id="PR00108">
    <property type="entry name" value="THYMDSNTHASE"/>
</dbReference>
<dbReference type="SUPFAM" id="SSF55831">
    <property type="entry name" value="Thymidylate synthase/dCMP hydroxymethylase"/>
    <property type="match status" value="1"/>
</dbReference>
<dbReference type="PROSITE" id="PS00091">
    <property type="entry name" value="THYMIDYLATE_SYNTHASE"/>
    <property type="match status" value="1"/>
</dbReference>
<proteinExistence type="inferred from homology"/>
<name>TYSY_BDEBA</name>
<protein>
    <recommendedName>
        <fullName evidence="1">Thymidylate synthase</fullName>
        <shortName evidence="1">TS</shortName>
        <shortName evidence="1">TSase</shortName>
        <ecNumber evidence="1">2.1.1.45</ecNumber>
    </recommendedName>
</protein>
<comment type="function">
    <text evidence="1">Catalyzes the reductive methylation of 2'-deoxyuridine-5'-monophosphate (dUMP) to 2'-deoxythymidine-5'-monophosphate (dTMP) while utilizing 5,10-methylenetetrahydrofolate (mTHF) as the methyl donor and reductant in the reaction, yielding dihydrofolate (DHF) as a by-product. This enzymatic reaction provides an intracellular de novo source of dTMP, an essential precursor for DNA biosynthesis.</text>
</comment>
<comment type="catalytic activity">
    <reaction evidence="1">
        <text>dUMP + (6R)-5,10-methylene-5,6,7,8-tetrahydrofolate = 7,8-dihydrofolate + dTMP</text>
        <dbReference type="Rhea" id="RHEA:12104"/>
        <dbReference type="ChEBI" id="CHEBI:15636"/>
        <dbReference type="ChEBI" id="CHEBI:57451"/>
        <dbReference type="ChEBI" id="CHEBI:63528"/>
        <dbReference type="ChEBI" id="CHEBI:246422"/>
        <dbReference type="EC" id="2.1.1.45"/>
    </reaction>
</comment>
<comment type="pathway">
    <text evidence="1">Pyrimidine metabolism; dTTP biosynthesis.</text>
</comment>
<comment type="subunit">
    <text evidence="1">Homodimer.</text>
</comment>
<comment type="subcellular location">
    <subcellularLocation>
        <location evidence="1">Cytoplasm</location>
    </subcellularLocation>
</comment>
<comment type="similarity">
    <text evidence="1">Belongs to the thymidylate synthase family. Bacterial-type ThyA subfamily.</text>
</comment>
<feature type="chain" id="PRO_0000140936" description="Thymidylate synthase">
    <location>
        <begin position="1"/>
        <end position="264"/>
    </location>
</feature>
<feature type="active site" description="Nucleophile" evidence="1">
    <location>
        <position position="146"/>
    </location>
</feature>
<feature type="binding site" description="in other chain" evidence="1">
    <location>
        <position position="21"/>
    </location>
    <ligand>
        <name>dUMP</name>
        <dbReference type="ChEBI" id="CHEBI:246422"/>
        <note>ligand shared between dimeric partners</note>
    </ligand>
</feature>
<feature type="binding site" evidence="1">
    <location>
        <position position="51"/>
    </location>
    <ligand>
        <name>(6R)-5,10-methylene-5,6,7,8-tetrahydrofolate</name>
        <dbReference type="ChEBI" id="CHEBI:15636"/>
    </ligand>
</feature>
<feature type="binding site" evidence="1">
    <location>
        <begin position="126"/>
        <end position="127"/>
    </location>
    <ligand>
        <name>dUMP</name>
        <dbReference type="ChEBI" id="CHEBI:246422"/>
        <note>ligand shared between dimeric partners</note>
    </ligand>
</feature>
<feature type="binding site" description="in other chain" evidence="1">
    <location>
        <begin position="166"/>
        <end position="169"/>
    </location>
    <ligand>
        <name>dUMP</name>
        <dbReference type="ChEBI" id="CHEBI:246422"/>
        <note>ligand shared between dimeric partners</note>
    </ligand>
</feature>
<feature type="binding site" evidence="1">
    <location>
        <position position="169"/>
    </location>
    <ligand>
        <name>(6R)-5,10-methylene-5,6,7,8-tetrahydrofolate</name>
        <dbReference type="ChEBI" id="CHEBI:15636"/>
    </ligand>
</feature>
<feature type="binding site" description="in other chain" evidence="1">
    <location>
        <position position="177"/>
    </location>
    <ligand>
        <name>dUMP</name>
        <dbReference type="ChEBI" id="CHEBI:246422"/>
        <note>ligand shared between dimeric partners</note>
    </ligand>
</feature>
<feature type="binding site" description="in other chain" evidence="1">
    <location>
        <begin position="207"/>
        <end position="209"/>
    </location>
    <ligand>
        <name>dUMP</name>
        <dbReference type="ChEBI" id="CHEBI:246422"/>
        <note>ligand shared between dimeric partners</note>
    </ligand>
</feature>
<feature type="binding site" evidence="1">
    <location>
        <position position="263"/>
    </location>
    <ligand>
        <name>(6R)-5,10-methylene-5,6,7,8-tetrahydrofolate</name>
        <dbReference type="ChEBI" id="CHEBI:15636"/>
    </ligand>
</feature>
<accession>Q6MID2</accession>
<organism>
    <name type="scientific">Bdellovibrio bacteriovorus (strain ATCC 15356 / DSM 50701 / NCIMB 9529 / HD100)</name>
    <dbReference type="NCBI Taxonomy" id="264462"/>
    <lineage>
        <taxon>Bacteria</taxon>
        <taxon>Pseudomonadati</taxon>
        <taxon>Bdellovibrionota</taxon>
        <taxon>Bdellovibrionia</taxon>
        <taxon>Bdellovibrionales</taxon>
        <taxon>Pseudobdellovibrionaceae</taxon>
        <taxon>Bdellovibrio</taxon>
    </lineage>
</organism>
<gene>
    <name evidence="1" type="primary">thyA</name>
    <name type="ordered locus">Bd3230</name>
</gene>
<sequence>MKQYHDLIKTVLEHGVKKEDRTGTGTISMFGYQMRYNLQEGFPLLTTKKLHTRSIFHELLWFLKGETNIKYLHDNKVTIWDEWADENGNLGPVYGKQWRSWETADGRTIDQITNVVEQIKKNPNSRRMLVVAFNPGDVDKMALPPCHAFFQFYVANGKLSCQLYQRSADIFLGVPFNIASYALLTHMIAQVCDLEVGDFVHTLGDAHLYLNHLEQANLQLTREFRPLPQLKLNPAKKDLFDFTYEDIEIIGYDPHPAIKAEVAV</sequence>
<evidence type="ECO:0000255" key="1">
    <source>
        <dbReference type="HAMAP-Rule" id="MF_00008"/>
    </source>
</evidence>
<keyword id="KW-0963">Cytoplasm</keyword>
<keyword id="KW-0489">Methyltransferase</keyword>
<keyword id="KW-0545">Nucleotide biosynthesis</keyword>
<keyword id="KW-1185">Reference proteome</keyword>
<keyword id="KW-0808">Transferase</keyword>
<reference key="1">
    <citation type="journal article" date="2004" name="Science">
        <title>A predator unmasked: life cycle of Bdellovibrio bacteriovorus from a genomic perspective.</title>
        <authorList>
            <person name="Rendulic S."/>
            <person name="Jagtap P."/>
            <person name="Rosinus A."/>
            <person name="Eppinger M."/>
            <person name="Baar C."/>
            <person name="Lanz C."/>
            <person name="Keller H."/>
            <person name="Lambert C."/>
            <person name="Evans K.J."/>
            <person name="Goesmann A."/>
            <person name="Meyer F."/>
            <person name="Sockett R.E."/>
            <person name="Schuster S.C."/>
        </authorList>
    </citation>
    <scope>NUCLEOTIDE SEQUENCE [LARGE SCALE GENOMIC DNA]</scope>
    <source>
        <strain>ATCC 15356 / DSM 50701 / NCIMB 9529 / HD100</strain>
    </source>
</reference>